<accession>Q03JD8</accession>
<organism>
    <name type="scientific">Streptococcus thermophilus (strain ATCC BAA-491 / LMD-9)</name>
    <dbReference type="NCBI Taxonomy" id="322159"/>
    <lineage>
        <taxon>Bacteria</taxon>
        <taxon>Bacillati</taxon>
        <taxon>Bacillota</taxon>
        <taxon>Bacilli</taxon>
        <taxon>Lactobacillales</taxon>
        <taxon>Streptococcaceae</taxon>
        <taxon>Streptococcus</taxon>
    </lineage>
</organism>
<sequence length="514" mass="58413">MSIRDEIKKRRTFAIISHPDAGKTTITEQLLYFGGEIREAGTVKGKKTGNFAKSDWMDIEKQRGISVTSSVMQFDYAGKRVNILDTPGHEDFSEDTYRTLMAVDAAVMVVDSAKGIEAQTKKLFEVVKHRGIPVFTFMNKLDRDGREPLDLLEELEEVLGIASYPMNWPIGMGKAFEGLYDLYNERLELYKGNERFAKIEDGDTLFANNPFYEQAKEDIELLTEAGNEFSEEAILAGELTPVFFGSALTNFGVQTFLDTFLKFAPEPHGHKTVDGDEIDPLNKDFSGFVFKIQANMDPRHRDRIAFVRIVSGEFERGMSVNLTRTGKGAKLSNVTQFMAESRENVENAVAGDIIGVYDTGTYQVGDTLTVGKNKFEFEPLPTFTPELFMKVSAKNVMKQKSFHKGIEQLVQEGAIQLYTNYQTGEYMLGAVGQLQFEVFKHRMENEYNAEVVMTPMGKKTVRWIQPEDLDERMSSSRNILAKDRFDQPVFLFENDFALRWFADKYPDVTLEEKM</sequence>
<protein>
    <recommendedName>
        <fullName evidence="1">Peptide chain release factor 3</fullName>
        <shortName evidence="1">RF-3</shortName>
    </recommendedName>
</protein>
<evidence type="ECO:0000255" key="1">
    <source>
        <dbReference type="HAMAP-Rule" id="MF_00072"/>
    </source>
</evidence>
<comment type="function">
    <text evidence="1">Increases the formation of ribosomal termination complexes and stimulates activities of RF-1 and RF-2. It binds guanine nucleotides and has strong preference for UGA stop codons. It may interact directly with the ribosome. The stimulation of RF-1 and RF-2 is significantly reduced by GTP and GDP, but not by GMP.</text>
</comment>
<comment type="subcellular location">
    <subcellularLocation>
        <location evidence="1">Cytoplasm</location>
    </subcellularLocation>
</comment>
<comment type="similarity">
    <text evidence="1">Belongs to the TRAFAC class translation factor GTPase superfamily. Classic translation factor GTPase family. PrfC subfamily.</text>
</comment>
<keyword id="KW-0963">Cytoplasm</keyword>
<keyword id="KW-0342">GTP-binding</keyword>
<keyword id="KW-0547">Nucleotide-binding</keyword>
<keyword id="KW-0648">Protein biosynthesis</keyword>
<dbReference type="EMBL" id="CP000419">
    <property type="protein sequence ID" value="ABJ66684.1"/>
    <property type="molecule type" value="Genomic_DNA"/>
</dbReference>
<dbReference type="RefSeq" id="WP_011681503.1">
    <property type="nucleotide sequence ID" value="NZ_CP086001.1"/>
</dbReference>
<dbReference type="SMR" id="Q03JD8"/>
<dbReference type="KEGG" id="ste:STER_1532"/>
<dbReference type="HOGENOM" id="CLU_002794_2_1_9"/>
<dbReference type="GO" id="GO:0005829">
    <property type="term" value="C:cytosol"/>
    <property type="evidence" value="ECO:0007669"/>
    <property type="project" value="TreeGrafter"/>
</dbReference>
<dbReference type="GO" id="GO:0005525">
    <property type="term" value="F:GTP binding"/>
    <property type="evidence" value="ECO:0007669"/>
    <property type="project" value="UniProtKB-UniRule"/>
</dbReference>
<dbReference type="GO" id="GO:0003924">
    <property type="term" value="F:GTPase activity"/>
    <property type="evidence" value="ECO:0007669"/>
    <property type="project" value="InterPro"/>
</dbReference>
<dbReference type="GO" id="GO:0016150">
    <property type="term" value="F:translation release factor activity, codon nonspecific"/>
    <property type="evidence" value="ECO:0007669"/>
    <property type="project" value="TreeGrafter"/>
</dbReference>
<dbReference type="GO" id="GO:0016149">
    <property type="term" value="F:translation release factor activity, codon specific"/>
    <property type="evidence" value="ECO:0007669"/>
    <property type="project" value="UniProtKB-UniRule"/>
</dbReference>
<dbReference type="GO" id="GO:0006449">
    <property type="term" value="P:regulation of translational termination"/>
    <property type="evidence" value="ECO:0007669"/>
    <property type="project" value="UniProtKB-UniRule"/>
</dbReference>
<dbReference type="CDD" id="cd04169">
    <property type="entry name" value="RF3"/>
    <property type="match status" value="1"/>
</dbReference>
<dbReference type="CDD" id="cd16259">
    <property type="entry name" value="RF3_III"/>
    <property type="match status" value="1"/>
</dbReference>
<dbReference type="FunFam" id="2.40.30.10:FF:000040">
    <property type="entry name" value="Peptide chain release factor 3"/>
    <property type="match status" value="1"/>
</dbReference>
<dbReference type="FunFam" id="3.30.70.3280:FF:000001">
    <property type="entry name" value="Peptide chain release factor 3"/>
    <property type="match status" value="1"/>
</dbReference>
<dbReference type="FunFam" id="3.40.50.300:FF:000542">
    <property type="entry name" value="Peptide chain release factor 3"/>
    <property type="match status" value="1"/>
</dbReference>
<dbReference type="Gene3D" id="3.40.50.300">
    <property type="entry name" value="P-loop containing nucleotide triphosphate hydrolases"/>
    <property type="match status" value="1"/>
</dbReference>
<dbReference type="Gene3D" id="3.30.70.3280">
    <property type="entry name" value="Peptide chain release factor 3, domain III"/>
    <property type="match status" value="1"/>
</dbReference>
<dbReference type="Gene3D" id="2.40.30.10">
    <property type="entry name" value="Translation factors"/>
    <property type="match status" value="1"/>
</dbReference>
<dbReference type="HAMAP" id="MF_00072">
    <property type="entry name" value="Rel_fac_3"/>
    <property type="match status" value="1"/>
</dbReference>
<dbReference type="InterPro" id="IPR053905">
    <property type="entry name" value="EF-G-like_DII"/>
</dbReference>
<dbReference type="InterPro" id="IPR035647">
    <property type="entry name" value="EFG_III/V"/>
</dbReference>
<dbReference type="InterPro" id="IPR031157">
    <property type="entry name" value="G_TR_CS"/>
</dbReference>
<dbReference type="InterPro" id="IPR027417">
    <property type="entry name" value="P-loop_NTPase"/>
</dbReference>
<dbReference type="InterPro" id="IPR004548">
    <property type="entry name" value="PrfC"/>
</dbReference>
<dbReference type="InterPro" id="IPR032090">
    <property type="entry name" value="RF3_C"/>
</dbReference>
<dbReference type="InterPro" id="IPR038467">
    <property type="entry name" value="RF3_dom_3_sf"/>
</dbReference>
<dbReference type="InterPro" id="IPR041732">
    <property type="entry name" value="RF3_GTP-bd"/>
</dbReference>
<dbReference type="InterPro" id="IPR005225">
    <property type="entry name" value="Small_GTP-bd"/>
</dbReference>
<dbReference type="InterPro" id="IPR000795">
    <property type="entry name" value="T_Tr_GTP-bd_dom"/>
</dbReference>
<dbReference type="InterPro" id="IPR009000">
    <property type="entry name" value="Transl_B-barrel_sf"/>
</dbReference>
<dbReference type="NCBIfam" id="TIGR00503">
    <property type="entry name" value="prfC"/>
    <property type="match status" value="1"/>
</dbReference>
<dbReference type="NCBIfam" id="NF001964">
    <property type="entry name" value="PRK00741.1"/>
    <property type="match status" value="1"/>
</dbReference>
<dbReference type="NCBIfam" id="TIGR00231">
    <property type="entry name" value="small_GTP"/>
    <property type="match status" value="1"/>
</dbReference>
<dbReference type="PANTHER" id="PTHR43556">
    <property type="entry name" value="PEPTIDE CHAIN RELEASE FACTOR RF3"/>
    <property type="match status" value="1"/>
</dbReference>
<dbReference type="PANTHER" id="PTHR43556:SF2">
    <property type="entry name" value="PEPTIDE CHAIN RELEASE FACTOR RF3"/>
    <property type="match status" value="1"/>
</dbReference>
<dbReference type="Pfam" id="PF22042">
    <property type="entry name" value="EF-G_D2"/>
    <property type="match status" value="1"/>
</dbReference>
<dbReference type="Pfam" id="PF00009">
    <property type="entry name" value="GTP_EFTU"/>
    <property type="match status" value="1"/>
</dbReference>
<dbReference type="Pfam" id="PF16658">
    <property type="entry name" value="RF3_C"/>
    <property type="match status" value="1"/>
</dbReference>
<dbReference type="PRINTS" id="PR00315">
    <property type="entry name" value="ELONGATNFCT"/>
</dbReference>
<dbReference type="PRINTS" id="PR01037">
    <property type="entry name" value="TCRTETOQM"/>
</dbReference>
<dbReference type="SUPFAM" id="SSF54980">
    <property type="entry name" value="EF-G C-terminal domain-like"/>
    <property type="match status" value="1"/>
</dbReference>
<dbReference type="SUPFAM" id="SSF52540">
    <property type="entry name" value="P-loop containing nucleoside triphosphate hydrolases"/>
    <property type="match status" value="1"/>
</dbReference>
<dbReference type="SUPFAM" id="SSF50447">
    <property type="entry name" value="Translation proteins"/>
    <property type="match status" value="1"/>
</dbReference>
<dbReference type="PROSITE" id="PS00301">
    <property type="entry name" value="G_TR_1"/>
    <property type="match status" value="1"/>
</dbReference>
<dbReference type="PROSITE" id="PS51722">
    <property type="entry name" value="G_TR_2"/>
    <property type="match status" value="1"/>
</dbReference>
<name>RF3_STRTD</name>
<feature type="chain" id="PRO_1000023692" description="Peptide chain release factor 3">
    <location>
        <begin position="1"/>
        <end position="514"/>
    </location>
</feature>
<feature type="domain" description="tr-type G">
    <location>
        <begin position="8"/>
        <end position="268"/>
    </location>
</feature>
<feature type="binding site" evidence="1">
    <location>
        <begin position="17"/>
        <end position="24"/>
    </location>
    <ligand>
        <name>GTP</name>
        <dbReference type="ChEBI" id="CHEBI:37565"/>
    </ligand>
</feature>
<feature type="binding site" evidence="1">
    <location>
        <begin position="85"/>
        <end position="89"/>
    </location>
    <ligand>
        <name>GTP</name>
        <dbReference type="ChEBI" id="CHEBI:37565"/>
    </ligand>
</feature>
<feature type="binding site" evidence="1">
    <location>
        <begin position="139"/>
        <end position="142"/>
    </location>
    <ligand>
        <name>GTP</name>
        <dbReference type="ChEBI" id="CHEBI:37565"/>
    </ligand>
</feature>
<reference key="1">
    <citation type="journal article" date="2006" name="Proc. Natl. Acad. Sci. U.S.A.">
        <title>Comparative genomics of the lactic acid bacteria.</title>
        <authorList>
            <person name="Makarova K.S."/>
            <person name="Slesarev A."/>
            <person name="Wolf Y.I."/>
            <person name="Sorokin A."/>
            <person name="Mirkin B."/>
            <person name="Koonin E.V."/>
            <person name="Pavlov A."/>
            <person name="Pavlova N."/>
            <person name="Karamychev V."/>
            <person name="Polouchine N."/>
            <person name="Shakhova V."/>
            <person name="Grigoriev I."/>
            <person name="Lou Y."/>
            <person name="Rohksar D."/>
            <person name="Lucas S."/>
            <person name="Huang K."/>
            <person name="Goodstein D.M."/>
            <person name="Hawkins T."/>
            <person name="Plengvidhya V."/>
            <person name="Welker D."/>
            <person name="Hughes J."/>
            <person name="Goh Y."/>
            <person name="Benson A."/>
            <person name="Baldwin K."/>
            <person name="Lee J.-H."/>
            <person name="Diaz-Muniz I."/>
            <person name="Dosti B."/>
            <person name="Smeianov V."/>
            <person name="Wechter W."/>
            <person name="Barabote R."/>
            <person name="Lorca G."/>
            <person name="Altermann E."/>
            <person name="Barrangou R."/>
            <person name="Ganesan B."/>
            <person name="Xie Y."/>
            <person name="Rawsthorne H."/>
            <person name="Tamir D."/>
            <person name="Parker C."/>
            <person name="Breidt F."/>
            <person name="Broadbent J.R."/>
            <person name="Hutkins R."/>
            <person name="O'Sullivan D."/>
            <person name="Steele J."/>
            <person name="Unlu G."/>
            <person name="Saier M.H. Jr."/>
            <person name="Klaenhammer T."/>
            <person name="Richardson P."/>
            <person name="Kozyavkin S."/>
            <person name="Weimer B.C."/>
            <person name="Mills D.A."/>
        </authorList>
    </citation>
    <scope>NUCLEOTIDE SEQUENCE [LARGE SCALE GENOMIC DNA]</scope>
    <source>
        <strain>ATCC BAA-491 / LMD-9</strain>
    </source>
</reference>
<proteinExistence type="inferred from homology"/>
<gene>
    <name evidence="1" type="primary">prfC</name>
    <name type="ordered locus">STER_1532</name>
</gene>